<name>SCX2X_CENTE</name>
<reference key="1">
    <citation type="journal article" date="1988" name="Toxicon">
        <title>Isolation of several toxins from the venom of the scorpion Centruroides limpidus tecomanus Hoffmann.</title>
        <authorList>
            <person name="Ramirez A.N."/>
            <person name="Gurrola G.B."/>
            <person name="Martin B.M."/>
            <person name="Possani L.D."/>
        </authorList>
    </citation>
    <scope>PROTEIN SEQUENCE</scope>
    <scope>SUBCELLULAR LOCATION</scope>
    <source>
        <tissue>Venom</tissue>
    </source>
</reference>
<organism>
    <name type="scientific">Centruroides tecomanus</name>
    <name type="common">Scorpion</name>
    <name type="synonym">Centruroides limpidus tecomanus</name>
    <dbReference type="NCBI Taxonomy" id="1028682"/>
    <lineage>
        <taxon>Eukaryota</taxon>
        <taxon>Metazoa</taxon>
        <taxon>Ecdysozoa</taxon>
        <taxon>Arthropoda</taxon>
        <taxon>Chelicerata</taxon>
        <taxon>Arachnida</taxon>
        <taxon>Scorpiones</taxon>
        <taxon>Buthida</taxon>
        <taxon>Buthoidea</taxon>
        <taxon>Buthidae</taxon>
        <taxon>Centruroides</taxon>
    </lineage>
</organism>
<comment type="function">
    <text>Binds to sodium channels (Nav) and inhibits the inactivation of the activated channels, thereby blocking neuronal transmission.</text>
</comment>
<comment type="subcellular location">
    <subcellularLocation>
        <location evidence="2">Secreted</location>
    </subcellularLocation>
</comment>
<comment type="tissue specificity">
    <text evidence="5">Expressed by the venom gland.</text>
</comment>
<comment type="domain">
    <text evidence="4">Has the structural arrangement of an alpha-helix connected to antiparallel beta-sheets by disulfide bonds (CS-alpha/beta).</text>
</comment>
<comment type="similarity">
    <text evidence="4">Belongs to the long (4 C-C) scorpion toxin superfamily. Sodium channel inhibitor family. Beta subfamily.</text>
</comment>
<keyword id="KW-0903">Direct protein sequencing</keyword>
<keyword id="KW-0872">Ion channel impairing toxin</keyword>
<keyword id="KW-0528">Neurotoxin</keyword>
<keyword id="KW-0964">Secreted</keyword>
<keyword id="KW-0800">Toxin</keyword>
<keyword id="KW-0738">Voltage-gated sodium channel impairing toxin</keyword>
<sequence length="30" mass="3489">KEGYIVNYHTGCKYTCAKLGDNDYCLRECK</sequence>
<protein>
    <recommendedName>
        <fullName evidence="3">Neurotoxin II.22.5</fullName>
    </recommendedName>
</protein>
<proteinExistence type="evidence at protein level"/>
<dbReference type="PIR" id="A31187">
    <property type="entry name" value="A31187"/>
</dbReference>
<dbReference type="SMR" id="P18927"/>
<dbReference type="GO" id="GO:0005576">
    <property type="term" value="C:extracellular region"/>
    <property type="evidence" value="ECO:0007669"/>
    <property type="project" value="UniProtKB-SubCell"/>
</dbReference>
<dbReference type="GO" id="GO:0019871">
    <property type="term" value="F:sodium channel inhibitor activity"/>
    <property type="evidence" value="ECO:0007669"/>
    <property type="project" value="InterPro"/>
</dbReference>
<dbReference type="GO" id="GO:0090729">
    <property type="term" value="F:toxin activity"/>
    <property type="evidence" value="ECO:0007669"/>
    <property type="project" value="UniProtKB-KW"/>
</dbReference>
<dbReference type="Gene3D" id="3.30.30.10">
    <property type="entry name" value="Knottin, scorpion toxin-like"/>
    <property type="match status" value="1"/>
</dbReference>
<dbReference type="InterPro" id="IPR044062">
    <property type="entry name" value="LCN-type_CS_alpha_beta_dom"/>
</dbReference>
<dbReference type="InterPro" id="IPR036574">
    <property type="entry name" value="Scorpion_toxin-like_sf"/>
</dbReference>
<dbReference type="InterPro" id="IPR002061">
    <property type="entry name" value="Scorpion_toxinL/defensin"/>
</dbReference>
<dbReference type="Pfam" id="PF00537">
    <property type="entry name" value="Toxin_3"/>
    <property type="match status" value="1"/>
</dbReference>
<dbReference type="SUPFAM" id="SSF57095">
    <property type="entry name" value="Scorpion toxin-like"/>
    <property type="match status" value="1"/>
</dbReference>
<dbReference type="PROSITE" id="PS51863">
    <property type="entry name" value="LCN_CSAB"/>
    <property type="match status" value="1"/>
</dbReference>
<accession>P18927</accession>
<feature type="chain" id="PRO_0000066766" description="Neurotoxin II.22.5" evidence="2">
    <location>
        <begin position="1"/>
        <end position="30" status="greater than"/>
    </location>
</feature>
<feature type="domain" description="LCN-type CS-alpha/beta" evidence="1">
    <location>
        <begin position="1"/>
        <end position="30" status="greater than"/>
    </location>
</feature>
<feature type="non-terminal residue" evidence="5">
    <location>
        <position position="30"/>
    </location>
</feature>
<evidence type="ECO:0000255" key="1">
    <source>
        <dbReference type="PROSITE-ProRule" id="PRU01210"/>
    </source>
</evidence>
<evidence type="ECO:0000269" key="2">
    <source>
    </source>
</evidence>
<evidence type="ECO:0000303" key="3">
    <source>
    </source>
</evidence>
<evidence type="ECO:0000305" key="4"/>
<evidence type="ECO:0000305" key="5">
    <source>
    </source>
</evidence>